<keyword id="KW-1003">Cell membrane</keyword>
<keyword id="KW-0406">Ion transport</keyword>
<keyword id="KW-0472">Membrane</keyword>
<keyword id="KW-1185">Reference proteome</keyword>
<keyword id="KW-0915">Sodium</keyword>
<keyword id="KW-0739">Sodium transport</keyword>
<keyword id="KW-1278">Translocase</keyword>
<keyword id="KW-0812">Transmembrane</keyword>
<keyword id="KW-1133">Transmembrane helix</keyword>
<keyword id="KW-0813">Transport</keyword>
<comment type="function">
    <text evidence="1">Catalyzes the decarboxylation of oxaloacetate coupled to Na(+) translocation.</text>
</comment>
<comment type="catalytic activity">
    <reaction>
        <text>oxaloacetate + 2 Na(+)(in) + H(+) = pyruvate + 2 Na(+)(out) + CO2</text>
        <dbReference type="Rhea" id="RHEA:57724"/>
        <dbReference type="ChEBI" id="CHEBI:15361"/>
        <dbReference type="ChEBI" id="CHEBI:15378"/>
        <dbReference type="ChEBI" id="CHEBI:16452"/>
        <dbReference type="ChEBI" id="CHEBI:16526"/>
        <dbReference type="ChEBI" id="CHEBI:29101"/>
        <dbReference type="EC" id="7.2.4.2"/>
    </reaction>
</comment>
<comment type="cofactor">
    <cofactor evidence="1">
        <name>Na(+)</name>
        <dbReference type="ChEBI" id="CHEBI:29101"/>
    </cofactor>
</comment>
<comment type="subunit">
    <text evidence="1">Heterotrimer of an alpha, a beta and a gamma subunit.</text>
</comment>
<comment type="subcellular location">
    <subcellularLocation>
        <location evidence="1">Cell membrane</location>
        <topology evidence="1">Single-pass membrane protein</topology>
    </subcellularLocation>
</comment>
<comment type="similarity">
    <text evidence="3">Belongs to the OadG family.</text>
</comment>
<comment type="sequence caution" evidence="3">
    <conflict type="erroneous initiation">
        <sequence resource="EMBL-CDS" id="AAF93958"/>
    </conflict>
</comment>
<feature type="chain" id="PRO_0000216462" description="Probable oxaloacetate decarboxylase gamma chain 2">
    <location>
        <begin position="1"/>
        <end position="90"/>
    </location>
</feature>
<feature type="transmembrane region" description="Helical" evidence="2">
    <location>
        <begin position="10"/>
        <end position="32"/>
    </location>
</feature>
<organism>
    <name type="scientific">Vibrio cholerae serotype O1 (strain ATCC 39315 / El Tor Inaba N16961)</name>
    <dbReference type="NCBI Taxonomy" id="243277"/>
    <lineage>
        <taxon>Bacteria</taxon>
        <taxon>Pseudomonadati</taxon>
        <taxon>Pseudomonadota</taxon>
        <taxon>Gammaproteobacteria</taxon>
        <taxon>Vibrionales</taxon>
        <taxon>Vibrionaceae</taxon>
        <taxon>Vibrio</taxon>
    </lineage>
</organism>
<protein>
    <recommendedName>
        <fullName>Probable oxaloacetate decarboxylase gamma chain 2</fullName>
        <ecNumber>7.2.4.2</ecNumber>
    </recommendedName>
</protein>
<proteinExistence type="inferred from homology"/>
<name>OADG2_VIBCH</name>
<sequence>MQSTSLFLEGINLLTLGMGFVFIFLIFLVYATRAMSQLIVRFAPPEVPAKTTNKKASANKAKANPNQNQGELLAVLTAAVHHHKTQQKLS</sequence>
<dbReference type="EC" id="7.2.4.2"/>
<dbReference type="EMBL" id="AE003852">
    <property type="protein sequence ID" value="AAF93958.1"/>
    <property type="status" value="ALT_INIT"/>
    <property type="molecule type" value="Genomic_DNA"/>
</dbReference>
<dbReference type="PIR" id="E82280">
    <property type="entry name" value="E82280"/>
</dbReference>
<dbReference type="RefSeq" id="NP_230443.1">
    <property type="nucleotide sequence ID" value="NC_002505.1"/>
</dbReference>
<dbReference type="SMR" id="Q9KTU4"/>
<dbReference type="STRING" id="243277.VC_0794"/>
<dbReference type="TCDB" id="3.B.1.1.6">
    <property type="family name" value="the na(+)-transporting carboxylic acid decarboxylase (nat-dc) family"/>
</dbReference>
<dbReference type="DNASU" id="2615337"/>
<dbReference type="EnsemblBacteria" id="AAF93958">
    <property type="protein sequence ID" value="AAF93958"/>
    <property type="gene ID" value="VC_0794"/>
</dbReference>
<dbReference type="KEGG" id="vch:VC_0794"/>
<dbReference type="PATRIC" id="fig|243277.26.peg.757"/>
<dbReference type="eggNOG" id="COG3630">
    <property type="taxonomic scope" value="Bacteria"/>
</dbReference>
<dbReference type="HOGENOM" id="CLU_168750_3_2_6"/>
<dbReference type="Proteomes" id="UP000000584">
    <property type="component" value="Chromosome 1"/>
</dbReference>
<dbReference type="GO" id="GO:0005886">
    <property type="term" value="C:plasma membrane"/>
    <property type="evidence" value="ECO:0007669"/>
    <property type="project" value="UniProtKB-SubCell"/>
</dbReference>
<dbReference type="GO" id="GO:0015451">
    <property type="term" value="F:decarboxylation-driven active transmembrane transporter activity"/>
    <property type="evidence" value="ECO:0007669"/>
    <property type="project" value="UniProtKB-EC"/>
</dbReference>
<dbReference type="GO" id="GO:0008948">
    <property type="term" value="F:oxaloacetate decarboxylase activity"/>
    <property type="evidence" value="ECO:0007669"/>
    <property type="project" value="UniProtKB-UniRule"/>
</dbReference>
<dbReference type="GO" id="GO:0015081">
    <property type="term" value="F:sodium ion transmembrane transporter activity"/>
    <property type="evidence" value="ECO:0007669"/>
    <property type="project" value="UniProtKB-UniRule"/>
</dbReference>
<dbReference type="GO" id="GO:0036376">
    <property type="term" value="P:sodium ion export across plasma membrane"/>
    <property type="evidence" value="ECO:0007669"/>
    <property type="project" value="InterPro"/>
</dbReference>
<dbReference type="HAMAP" id="MF_00404">
    <property type="entry name" value="OadG"/>
    <property type="match status" value="1"/>
</dbReference>
<dbReference type="InterPro" id="IPR005899">
    <property type="entry name" value="Na_pump_deCOase"/>
</dbReference>
<dbReference type="InterPro" id="IPR023424">
    <property type="entry name" value="OadG"/>
</dbReference>
<dbReference type="NCBIfam" id="TIGR01195">
    <property type="entry name" value="oadG_fam"/>
    <property type="match status" value="1"/>
</dbReference>
<dbReference type="Pfam" id="PF04277">
    <property type="entry name" value="OAD_gamma"/>
    <property type="match status" value="1"/>
</dbReference>
<evidence type="ECO:0000250" key="1"/>
<evidence type="ECO:0000255" key="2"/>
<evidence type="ECO:0000305" key="3"/>
<accession>Q9KTU4</accession>
<gene>
    <name type="primary">oadG2</name>
    <name type="ordered locus">VC_0794</name>
</gene>
<reference key="1">
    <citation type="journal article" date="2000" name="Nature">
        <title>DNA sequence of both chromosomes of the cholera pathogen Vibrio cholerae.</title>
        <authorList>
            <person name="Heidelberg J.F."/>
            <person name="Eisen J.A."/>
            <person name="Nelson W.C."/>
            <person name="Clayton R.A."/>
            <person name="Gwinn M.L."/>
            <person name="Dodson R.J."/>
            <person name="Haft D.H."/>
            <person name="Hickey E.K."/>
            <person name="Peterson J.D."/>
            <person name="Umayam L.A."/>
            <person name="Gill S.R."/>
            <person name="Nelson K.E."/>
            <person name="Read T.D."/>
            <person name="Tettelin H."/>
            <person name="Richardson D.L."/>
            <person name="Ermolaeva M.D."/>
            <person name="Vamathevan J.J."/>
            <person name="Bass S."/>
            <person name="Qin H."/>
            <person name="Dragoi I."/>
            <person name="Sellers P."/>
            <person name="McDonald L.A."/>
            <person name="Utterback T.R."/>
            <person name="Fleischmann R.D."/>
            <person name="Nierman W.C."/>
            <person name="White O."/>
            <person name="Salzberg S.L."/>
            <person name="Smith H.O."/>
            <person name="Colwell R.R."/>
            <person name="Mekalanos J.J."/>
            <person name="Venter J.C."/>
            <person name="Fraser C.M."/>
        </authorList>
    </citation>
    <scope>NUCLEOTIDE SEQUENCE [LARGE SCALE GENOMIC DNA]</scope>
    <source>
        <strain>ATCC 39315 / El Tor Inaba N16961</strain>
    </source>
</reference>